<feature type="chain" id="PRO_0000289182" description="Cytoplasmic tRNA 2-thiolation protein 2">
    <location>
        <begin position="1"/>
        <end position="405"/>
    </location>
</feature>
<feature type="sequence conflict" description="In Ref. 3; ACI46554." evidence="2" ref="3">
    <original>R</original>
    <variation>S</variation>
    <location>
        <position position="63"/>
    </location>
</feature>
<feature type="sequence conflict" description="In Ref. 3; ACI46554." evidence="2" ref="3">
    <original>V</original>
    <variation>A</variation>
    <location>
        <position position="327"/>
    </location>
</feature>
<comment type="function">
    <text evidence="1">Plays a central role in 2-thiolation of mcm(5)S(2)U at tRNA wobble positions of tRNA(Lys), tRNA(Glu) and tRNA(Gln). May act by forming a heterodimer with NCS6/CTU1 that ligates sulfur from thiocarboxylated URM1 onto the uridine of tRNAs at wobble position.</text>
</comment>
<comment type="pathway">
    <text evidence="1">tRNA modification; 5-methoxycarbonylmethyl-2-thiouridine-tRNA biosynthesis.</text>
</comment>
<comment type="subcellular location">
    <subcellularLocation>
        <location evidence="1">Cytoplasm</location>
    </subcellularLocation>
</comment>
<comment type="similarity">
    <text evidence="1">Belongs to the CTU2/NCS2 family.</text>
</comment>
<comment type="sequence caution" evidence="2">
    <conflict type="erroneous initiation">
        <sequence resource="EMBL-CDS" id="AAM48337"/>
    </conflict>
</comment>
<comment type="sequence caution" evidence="2">
    <conflict type="erroneous initiation">
        <sequence resource="EMBL-CDS" id="ACI46554"/>
    </conflict>
</comment>
<organism evidence="4">
    <name type="scientific">Drosophila melanogaster</name>
    <name type="common">Fruit fly</name>
    <dbReference type="NCBI Taxonomy" id="7227"/>
    <lineage>
        <taxon>Eukaryota</taxon>
        <taxon>Metazoa</taxon>
        <taxon>Ecdysozoa</taxon>
        <taxon>Arthropoda</taxon>
        <taxon>Hexapoda</taxon>
        <taxon>Insecta</taxon>
        <taxon>Pterygota</taxon>
        <taxon>Neoptera</taxon>
        <taxon>Endopterygota</taxon>
        <taxon>Diptera</taxon>
        <taxon>Brachycera</taxon>
        <taxon>Muscomorpha</taxon>
        <taxon>Ephydroidea</taxon>
        <taxon>Drosophilidae</taxon>
        <taxon>Drosophila</taxon>
        <taxon>Sophophora</taxon>
    </lineage>
</organism>
<proteinExistence type="evidence at transcript level"/>
<reference key="1">
    <citation type="journal article" date="2000" name="Science">
        <title>The genome sequence of Drosophila melanogaster.</title>
        <authorList>
            <person name="Adams M.D."/>
            <person name="Celniker S.E."/>
            <person name="Holt R.A."/>
            <person name="Evans C.A."/>
            <person name="Gocayne J.D."/>
            <person name="Amanatides P.G."/>
            <person name="Scherer S.E."/>
            <person name="Li P.W."/>
            <person name="Hoskins R.A."/>
            <person name="Galle R.F."/>
            <person name="George R.A."/>
            <person name="Lewis S.E."/>
            <person name="Richards S."/>
            <person name="Ashburner M."/>
            <person name="Henderson S.N."/>
            <person name="Sutton G.G."/>
            <person name="Wortman J.R."/>
            <person name="Yandell M.D."/>
            <person name="Zhang Q."/>
            <person name="Chen L.X."/>
            <person name="Brandon R.C."/>
            <person name="Rogers Y.-H.C."/>
            <person name="Blazej R.G."/>
            <person name="Champe M."/>
            <person name="Pfeiffer B.D."/>
            <person name="Wan K.H."/>
            <person name="Doyle C."/>
            <person name="Baxter E.G."/>
            <person name="Helt G."/>
            <person name="Nelson C.R."/>
            <person name="Miklos G.L.G."/>
            <person name="Abril J.F."/>
            <person name="Agbayani A."/>
            <person name="An H.-J."/>
            <person name="Andrews-Pfannkoch C."/>
            <person name="Baldwin D."/>
            <person name="Ballew R.M."/>
            <person name="Basu A."/>
            <person name="Baxendale J."/>
            <person name="Bayraktaroglu L."/>
            <person name="Beasley E.M."/>
            <person name="Beeson K.Y."/>
            <person name="Benos P.V."/>
            <person name="Berman B.P."/>
            <person name="Bhandari D."/>
            <person name="Bolshakov S."/>
            <person name="Borkova D."/>
            <person name="Botchan M.R."/>
            <person name="Bouck J."/>
            <person name="Brokstein P."/>
            <person name="Brottier P."/>
            <person name="Burtis K.C."/>
            <person name="Busam D.A."/>
            <person name="Butler H."/>
            <person name="Cadieu E."/>
            <person name="Center A."/>
            <person name="Chandra I."/>
            <person name="Cherry J.M."/>
            <person name="Cawley S."/>
            <person name="Dahlke C."/>
            <person name="Davenport L.B."/>
            <person name="Davies P."/>
            <person name="de Pablos B."/>
            <person name="Delcher A."/>
            <person name="Deng Z."/>
            <person name="Mays A.D."/>
            <person name="Dew I."/>
            <person name="Dietz S.M."/>
            <person name="Dodson K."/>
            <person name="Doup L.E."/>
            <person name="Downes M."/>
            <person name="Dugan-Rocha S."/>
            <person name="Dunkov B.C."/>
            <person name="Dunn P."/>
            <person name="Durbin K.J."/>
            <person name="Evangelista C.C."/>
            <person name="Ferraz C."/>
            <person name="Ferriera S."/>
            <person name="Fleischmann W."/>
            <person name="Fosler C."/>
            <person name="Gabrielian A.E."/>
            <person name="Garg N.S."/>
            <person name="Gelbart W.M."/>
            <person name="Glasser K."/>
            <person name="Glodek A."/>
            <person name="Gong F."/>
            <person name="Gorrell J.H."/>
            <person name="Gu Z."/>
            <person name="Guan P."/>
            <person name="Harris M."/>
            <person name="Harris N.L."/>
            <person name="Harvey D.A."/>
            <person name="Heiman T.J."/>
            <person name="Hernandez J.R."/>
            <person name="Houck J."/>
            <person name="Hostin D."/>
            <person name="Houston K.A."/>
            <person name="Howland T.J."/>
            <person name="Wei M.-H."/>
            <person name="Ibegwam C."/>
            <person name="Jalali M."/>
            <person name="Kalush F."/>
            <person name="Karpen G.H."/>
            <person name="Ke Z."/>
            <person name="Kennison J.A."/>
            <person name="Ketchum K.A."/>
            <person name="Kimmel B.E."/>
            <person name="Kodira C.D."/>
            <person name="Kraft C.L."/>
            <person name="Kravitz S."/>
            <person name="Kulp D."/>
            <person name="Lai Z."/>
            <person name="Lasko P."/>
            <person name="Lei Y."/>
            <person name="Levitsky A.A."/>
            <person name="Li J.H."/>
            <person name="Li Z."/>
            <person name="Liang Y."/>
            <person name="Lin X."/>
            <person name="Liu X."/>
            <person name="Mattei B."/>
            <person name="McIntosh T.C."/>
            <person name="McLeod M.P."/>
            <person name="McPherson D."/>
            <person name="Merkulov G."/>
            <person name="Milshina N.V."/>
            <person name="Mobarry C."/>
            <person name="Morris J."/>
            <person name="Moshrefi A."/>
            <person name="Mount S.M."/>
            <person name="Moy M."/>
            <person name="Murphy B."/>
            <person name="Murphy L."/>
            <person name="Muzny D.M."/>
            <person name="Nelson D.L."/>
            <person name="Nelson D.R."/>
            <person name="Nelson K.A."/>
            <person name="Nixon K."/>
            <person name="Nusskern D.R."/>
            <person name="Pacleb J.M."/>
            <person name="Palazzolo M."/>
            <person name="Pittman G.S."/>
            <person name="Pan S."/>
            <person name="Pollard J."/>
            <person name="Puri V."/>
            <person name="Reese M.G."/>
            <person name="Reinert K."/>
            <person name="Remington K."/>
            <person name="Saunders R.D.C."/>
            <person name="Scheeler F."/>
            <person name="Shen H."/>
            <person name="Shue B.C."/>
            <person name="Siden-Kiamos I."/>
            <person name="Simpson M."/>
            <person name="Skupski M.P."/>
            <person name="Smith T.J."/>
            <person name="Spier E."/>
            <person name="Spradling A.C."/>
            <person name="Stapleton M."/>
            <person name="Strong R."/>
            <person name="Sun E."/>
            <person name="Svirskas R."/>
            <person name="Tector C."/>
            <person name="Turner R."/>
            <person name="Venter E."/>
            <person name="Wang A.H."/>
            <person name="Wang X."/>
            <person name="Wang Z.-Y."/>
            <person name="Wassarman D.A."/>
            <person name="Weinstock G.M."/>
            <person name="Weissenbach J."/>
            <person name="Williams S.M."/>
            <person name="Woodage T."/>
            <person name="Worley K.C."/>
            <person name="Wu D."/>
            <person name="Yang S."/>
            <person name="Yao Q.A."/>
            <person name="Ye J."/>
            <person name="Yeh R.-F."/>
            <person name="Zaveri J.S."/>
            <person name="Zhan M."/>
            <person name="Zhang G."/>
            <person name="Zhao Q."/>
            <person name="Zheng L."/>
            <person name="Zheng X.H."/>
            <person name="Zhong F.N."/>
            <person name="Zhong W."/>
            <person name="Zhou X."/>
            <person name="Zhu S.C."/>
            <person name="Zhu X."/>
            <person name="Smith H.O."/>
            <person name="Gibbs R.A."/>
            <person name="Myers E.W."/>
            <person name="Rubin G.M."/>
            <person name="Venter J.C."/>
        </authorList>
    </citation>
    <scope>NUCLEOTIDE SEQUENCE [LARGE SCALE GENOMIC DNA]</scope>
    <source>
        <strain>Berkeley</strain>
    </source>
</reference>
<reference key="2">
    <citation type="journal article" date="2002" name="Genome Biol.">
        <title>Annotation of the Drosophila melanogaster euchromatic genome: a systematic review.</title>
        <authorList>
            <person name="Misra S."/>
            <person name="Crosby M.A."/>
            <person name="Mungall C.J."/>
            <person name="Matthews B.B."/>
            <person name="Campbell K.S."/>
            <person name="Hradecky P."/>
            <person name="Huang Y."/>
            <person name="Kaminker J.S."/>
            <person name="Millburn G.H."/>
            <person name="Prochnik S.E."/>
            <person name="Smith C.D."/>
            <person name="Tupy J.L."/>
            <person name="Whitfield E.J."/>
            <person name="Bayraktaroglu L."/>
            <person name="Berman B.P."/>
            <person name="Bettencourt B.R."/>
            <person name="Celniker S.E."/>
            <person name="de Grey A.D.N.J."/>
            <person name="Drysdale R.A."/>
            <person name="Harris N.L."/>
            <person name="Richter J."/>
            <person name="Russo S."/>
            <person name="Schroeder A.J."/>
            <person name="Shu S.Q."/>
            <person name="Stapleton M."/>
            <person name="Yamada C."/>
            <person name="Ashburner M."/>
            <person name="Gelbart W.M."/>
            <person name="Rubin G.M."/>
            <person name="Lewis S.E."/>
        </authorList>
    </citation>
    <scope>GENOME REANNOTATION</scope>
    <source>
        <strain>Berkeley</strain>
    </source>
</reference>
<reference key="3">
    <citation type="submission" date="2008-10" db="EMBL/GenBank/DDBJ databases">
        <authorList>
            <person name="Carlson J.W."/>
            <person name="Booth B."/>
            <person name="Frise E."/>
            <person name="Park S."/>
            <person name="Wan K.H."/>
            <person name="Yu C."/>
            <person name="Celniker S.E."/>
        </authorList>
    </citation>
    <scope>NUCLEOTIDE SEQUENCE [LARGE SCALE MRNA]</scope>
    <source>
        <strain>Berkeley</strain>
        <tissue>Embryo</tissue>
    </source>
</reference>
<reference key="4">
    <citation type="journal article" date="2002" name="Genome Biol.">
        <title>A Drosophila full-length cDNA resource.</title>
        <authorList>
            <person name="Stapleton M."/>
            <person name="Carlson J.W."/>
            <person name="Brokstein P."/>
            <person name="Yu C."/>
            <person name="Champe M."/>
            <person name="George R.A."/>
            <person name="Guarin H."/>
            <person name="Kronmiller B."/>
            <person name="Pacleb J.M."/>
            <person name="Park S."/>
            <person name="Wan K.H."/>
            <person name="Rubin G.M."/>
            <person name="Celniker S.E."/>
        </authorList>
    </citation>
    <scope>NUCLEOTIDE SEQUENCE [LARGE SCALE MRNA] OF 6-405</scope>
    <source>
        <strain>Berkeley</strain>
        <tissue>Head</tissue>
    </source>
</reference>
<dbReference type="EMBL" id="AE014134">
    <property type="protein sequence ID" value="AAF53811.1"/>
    <property type="molecule type" value="Genomic_DNA"/>
</dbReference>
<dbReference type="EMBL" id="AE014134">
    <property type="protein sequence ID" value="AGB93120.1"/>
    <property type="molecule type" value="Genomic_DNA"/>
</dbReference>
<dbReference type="EMBL" id="BT046166">
    <property type="protein sequence ID" value="ACI46554.1"/>
    <property type="status" value="ALT_INIT"/>
    <property type="molecule type" value="mRNA"/>
</dbReference>
<dbReference type="EMBL" id="AY118308">
    <property type="protein sequence ID" value="AAM48337.1"/>
    <property type="status" value="ALT_INIT"/>
    <property type="molecule type" value="mRNA"/>
</dbReference>
<dbReference type="RefSeq" id="NP_001260585.1">
    <property type="nucleotide sequence ID" value="NM_001273656.1"/>
</dbReference>
<dbReference type="RefSeq" id="NP_609975.1">
    <property type="nucleotide sequence ID" value="NM_136131.4"/>
</dbReference>
<dbReference type="SMR" id="Q9VIV3"/>
<dbReference type="BioGRID" id="61211">
    <property type="interactions" value="4"/>
</dbReference>
<dbReference type="FunCoup" id="Q9VIV3">
    <property type="interactions" value="1773"/>
</dbReference>
<dbReference type="IntAct" id="Q9VIV3">
    <property type="interactions" value="3"/>
</dbReference>
<dbReference type="STRING" id="7227.FBpp0303745"/>
<dbReference type="PaxDb" id="7227-FBpp0303745"/>
<dbReference type="EnsemblMetazoa" id="FBtr0081284">
    <property type="protein sequence ID" value="FBpp0080822"/>
    <property type="gene ID" value="FBgn0032793"/>
</dbReference>
<dbReference type="EnsemblMetazoa" id="FBtr0331327">
    <property type="protein sequence ID" value="FBpp0303745"/>
    <property type="gene ID" value="FBgn0032793"/>
</dbReference>
<dbReference type="GeneID" id="35234"/>
<dbReference type="KEGG" id="dme:Dmel_CG10189"/>
<dbReference type="UCSC" id="CG10189-RA">
    <property type="organism name" value="d. melanogaster"/>
</dbReference>
<dbReference type="AGR" id="FB:FBgn0032793"/>
<dbReference type="CTD" id="348180"/>
<dbReference type="FlyBase" id="FBgn0032793">
    <property type="gene designation" value="Ctu2"/>
</dbReference>
<dbReference type="VEuPathDB" id="VectorBase:FBgn0032793"/>
<dbReference type="eggNOG" id="KOG2594">
    <property type="taxonomic scope" value="Eukaryota"/>
</dbReference>
<dbReference type="GeneTree" id="ENSGT00390000008797"/>
<dbReference type="HOGENOM" id="CLU_024534_2_1_1"/>
<dbReference type="InParanoid" id="Q9VIV3"/>
<dbReference type="OMA" id="CHACRNI"/>
<dbReference type="OrthoDB" id="25129at2759"/>
<dbReference type="PhylomeDB" id="Q9VIV3"/>
<dbReference type="UniPathway" id="UPA00988"/>
<dbReference type="BioGRID-ORCS" id="35234">
    <property type="hits" value="1 hit in 1 CRISPR screen"/>
</dbReference>
<dbReference type="GenomeRNAi" id="35234"/>
<dbReference type="PRO" id="PR:Q9VIV3"/>
<dbReference type="Proteomes" id="UP000000803">
    <property type="component" value="Chromosome 2L"/>
</dbReference>
<dbReference type="Bgee" id="FBgn0032793">
    <property type="expression patterns" value="Expressed in adult enteroendocrine precursor cell in adult midgut (Drosophila) and 33 other cell types or tissues"/>
</dbReference>
<dbReference type="GO" id="GO:0005829">
    <property type="term" value="C:cytosol"/>
    <property type="evidence" value="ECO:0000250"/>
    <property type="project" value="UniProtKB"/>
</dbReference>
<dbReference type="GO" id="GO:0002144">
    <property type="term" value="C:cytosolic tRNA wobble base thiouridylase complex"/>
    <property type="evidence" value="ECO:0000250"/>
    <property type="project" value="FlyBase"/>
</dbReference>
<dbReference type="GO" id="GO:0016779">
    <property type="term" value="F:nucleotidyltransferase activity"/>
    <property type="evidence" value="ECO:0007669"/>
    <property type="project" value="UniProtKB-UniRule"/>
</dbReference>
<dbReference type="GO" id="GO:0016783">
    <property type="term" value="F:sulfurtransferase activity"/>
    <property type="evidence" value="ECO:0000318"/>
    <property type="project" value="GO_Central"/>
</dbReference>
<dbReference type="GO" id="GO:0000049">
    <property type="term" value="F:tRNA binding"/>
    <property type="evidence" value="ECO:0007669"/>
    <property type="project" value="InterPro"/>
</dbReference>
<dbReference type="GO" id="GO:0032447">
    <property type="term" value="P:protein urmylation"/>
    <property type="evidence" value="ECO:0007669"/>
    <property type="project" value="UniProtKB-UniRule"/>
</dbReference>
<dbReference type="GO" id="GO:0034227">
    <property type="term" value="P:tRNA thio-modification"/>
    <property type="evidence" value="ECO:0000250"/>
    <property type="project" value="UniProtKB"/>
</dbReference>
<dbReference type="GO" id="GO:0002143">
    <property type="term" value="P:tRNA wobble position uridine thiolation"/>
    <property type="evidence" value="ECO:0000318"/>
    <property type="project" value="GO_Central"/>
</dbReference>
<dbReference type="GO" id="GO:0002098">
    <property type="term" value="P:tRNA wobble uridine modification"/>
    <property type="evidence" value="ECO:0000250"/>
    <property type="project" value="UniProtKB"/>
</dbReference>
<dbReference type="FunFam" id="3.40.50.620:FF:000229">
    <property type="entry name" value="Cytoplasmic tRNA 2-thiolation protein 2"/>
    <property type="match status" value="1"/>
</dbReference>
<dbReference type="Gene3D" id="3.40.50.620">
    <property type="entry name" value="HUPs"/>
    <property type="match status" value="1"/>
</dbReference>
<dbReference type="HAMAP" id="MF_03054">
    <property type="entry name" value="CTU2"/>
    <property type="match status" value="1"/>
</dbReference>
<dbReference type="InterPro" id="IPR019407">
    <property type="entry name" value="CTU2"/>
</dbReference>
<dbReference type="InterPro" id="IPR014729">
    <property type="entry name" value="Rossmann-like_a/b/a_fold"/>
</dbReference>
<dbReference type="PANTHER" id="PTHR20882">
    <property type="entry name" value="CYTOPLASMIC TRNA 2-THIOLATION PROTEIN 2"/>
    <property type="match status" value="1"/>
</dbReference>
<dbReference type="PANTHER" id="PTHR20882:SF14">
    <property type="entry name" value="CYTOPLASMIC TRNA 2-THIOLATION PROTEIN 2"/>
    <property type="match status" value="1"/>
</dbReference>
<dbReference type="Pfam" id="PF10288">
    <property type="entry name" value="CTU2"/>
    <property type="match status" value="1"/>
</dbReference>
<dbReference type="SUPFAM" id="SSF52402">
    <property type="entry name" value="Adenine nucleotide alpha hydrolases-like"/>
    <property type="match status" value="1"/>
</dbReference>
<sequence length="405" mass="44773">MCSIGEDDFGDEGAAHAMVVESLPLGIVLSPGNCSKCDVNSGELYKLNFRTAECRECFLAYARHKFRAALGAAKILPRNAEVLLVLDGSAESLVLLDMLHFAQTQNTFKRLHCNARVVYVEEQQVQGRDPVDLEALQRLSTQYAPFDFYVIELGALPSSLQRIKDYSPFLNANNELIHKLQKLRSLTARQDYLQQQRKNLICSVAQCLQCTHVFESNISVDLATQLLTAIALGRGGSAALDVALLDDRLSGDVKLLRPLKDLTEQEIQFYIHAQRLKPHFQKGSRYGMEHGETASLQNLTSAFVANLQQNFASTVSTVFRTGDKIAVNSNPEQSSCVHCRSTLDSELSDTLLAIEYSRSVSEAGVSLYKSGQDLEGLAKKRLENKDGLCHACRAIQTELDSGNLL</sequence>
<evidence type="ECO:0000255" key="1">
    <source>
        <dbReference type="HAMAP-Rule" id="MF_03054"/>
    </source>
</evidence>
<evidence type="ECO:0000305" key="2"/>
<evidence type="ECO:0000312" key="3">
    <source>
        <dbReference type="FlyBase" id="FBgn0032793"/>
    </source>
</evidence>
<evidence type="ECO:0000312" key="4">
    <source>
        <dbReference type="Proteomes" id="UP000000803"/>
    </source>
</evidence>
<keyword id="KW-0963">Cytoplasm</keyword>
<keyword id="KW-1185">Reference proteome</keyword>
<keyword id="KW-0819">tRNA processing</keyword>
<gene>
    <name evidence="3" type="primary">Ctu2</name>
    <name evidence="3" type="ORF">CG10189</name>
</gene>
<protein>
    <recommendedName>
        <fullName evidence="1">Cytoplasmic tRNA 2-thiolation protein 2</fullName>
    </recommendedName>
    <alternativeName>
        <fullName evidence="3">Cytosolic thiouridylase subunit 2</fullName>
    </alternativeName>
</protein>
<accession>Q9VIV3</accession>
<accession>B5X547</accession>
<accession>M9PDQ5</accession>
<accession>Q8MT91</accession>
<name>CTU2_DROME</name>